<evidence type="ECO:0000250" key="1"/>
<evidence type="ECO:0000255" key="2">
    <source>
        <dbReference type="PROSITE-ProRule" id="PRU00159"/>
    </source>
</evidence>
<evidence type="ECO:0000255" key="3">
    <source>
        <dbReference type="PROSITE-ProRule" id="PRU10027"/>
    </source>
</evidence>
<evidence type="ECO:0000256" key="4">
    <source>
        <dbReference type="SAM" id="MobiDB-lite"/>
    </source>
</evidence>
<evidence type="ECO:0000305" key="5"/>
<evidence type="ECO:0000312" key="6">
    <source>
        <dbReference type="EMBL" id="AAI61237.1"/>
    </source>
</evidence>
<feature type="chain" id="PRO_0000252266" description="Serine/threonine-protein kinase 40">
    <location>
        <begin position="1"/>
        <end position="443"/>
    </location>
</feature>
<feature type="domain" description="Protein kinase" evidence="2">
    <location>
        <begin position="35"/>
        <end position="332"/>
    </location>
</feature>
<feature type="region of interest" description="Disordered" evidence="4">
    <location>
        <begin position="1"/>
        <end position="26"/>
    </location>
</feature>
<feature type="compositionally biased region" description="Basic and acidic residues" evidence="4">
    <location>
        <begin position="1"/>
        <end position="11"/>
    </location>
</feature>
<feature type="compositionally biased region" description="Polar residues" evidence="4">
    <location>
        <begin position="14"/>
        <end position="26"/>
    </location>
</feature>
<feature type="active site" description="Proton acceptor" evidence="2 3">
    <location>
        <position position="197"/>
    </location>
</feature>
<feature type="binding site" evidence="2">
    <location>
        <begin position="41"/>
        <end position="49"/>
    </location>
    <ligand>
        <name>ATP</name>
        <dbReference type="ChEBI" id="CHEBI:30616"/>
    </ligand>
</feature>
<feature type="binding site" evidence="2">
    <location>
        <position position="66"/>
    </location>
    <ligand>
        <name>ATP</name>
        <dbReference type="ChEBI" id="CHEBI:30616"/>
    </ligand>
</feature>
<feature type="sequence conflict" description="In Ref. 1; AAQ01592." evidence="5" ref="1">
    <original>R</original>
    <variation>K</variation>
    <location>
        <position position="16"/>
    </location>
</feature>
<feature type="sequence conflict" description="In Ref. 1; AAQ01592." evidence="5" ref="1">
    <original>E</original>
    <variation>D</variation>
    <location>
        <position position="71"/>
    </location>
</feature>
<feature type="sequence conflict" description="In Ref. 1; AAQ01592." evidence="5" ref="1">
    <original>R</original>
    <variation>K</variation>
    <location>
        <position position="73"/>
    </location>
</feature>
<reference key="1">
    <citation type="submission" date="2003-07" db="EMBL/GenBank/DDBJ databases">
        <title>Cloning and characterization of human, mouse, rat, chick and frog lyk4 gene.</title>
        <authorList>
            <person name="Shan Y.X."/>
            <person name="Yu L."/>
        </authorList>
    </citation>
    <scope>NUCLEOTIDE SEQUENCE [MRNA]</scope>
    <source>
        <tissue>Egg</tissue>
    </source>
</reference>
<reference evidence="6" key="2">
    <citation type="submission" date="2008-03" db="EMBL/GenBank/DDBJ databases">
        <authorList>
            <consortium name="NIH - Xenopus Gene Collection (XGC) project"/>
        </authorList>
    </citation>
    <scope>NUCLEOTIDE SEQUENCE [LARGE SCALE MRNA]</scope>
    <source>
        <tissue evidence="6">Thymus</tissue>
    </source>
</reference>
<reference key="3">
    <citation type="journal article" date="2010" name="Science">
        <title>The genome of the Western clawed frog Xenopus tropicalis.</title>
        <authorList>
            <person name="Hellsten U."/>
            <person name="Harland R.M."/>
            <person name="Gilchrist M.J."/>
            <person name="Hendrix D."/>
            <person name="Jurka J."/>
            <person name="Kapitonov V."/>
            <person name="Ovcharenko I."/>
            <person name="Putnam N.H."/>
            <person name="Shu S."/>
            <person name="Taher L."/>
            <person name="Blitz I.L."/>
            <person name="Blumberg B."/>
            <person name="Dichmann D.S."/>
            <person name="Dubchak I."/>
            <person name="Amaya E."/>
            <person name="Detter J.C."/>
            <person name="Fletcher R."/>
            <person name="Gerhard D.S."/>
            <person name="Goodstein D."/>
            <person name="Graves T."/>
            <person name="Grigoriev I.V."/>
            <person name="Grimwood J."/>
            <person name="Kawashima T."/>
            <person name="Lindquist E."/>
            <person name="Lucas S.M."/>
            <person name="Mead P.E."/>
            <person name="Mitros T."/>
            <person name="Ogino H."/>
            <person name="Ohta Y."/>
            <person name="Poliakov A.V."/>
            <person name="Pollet N."/>
            <person name="Robert J."/>
            <person name="Salamov A."/>
            <person name="Sater A.K."/>
            <person name="Schmutz J."/>
            <person name="Terry A."/>
            <person name="Vize P.D."/>
            <person name="Warren W.C."/>
            <person name="Wells D."/>
            <person name="Wills A."/>
            <person name="Wilson R.K."/>
            <person name="Zimmerman L.B."/>
            <person name="Zorn A.M."/>
            <person name="Grainger R."/>
            <person name="Grammer T."/>
            <person name="Khokha M.K."/>
            <person name="Richardson P.M."/>
            <person name="Rokhsar D.S."/>
        </authorList>
    </citation>
    <scope>NUCLEOTIDE SEQUENCE [LARGE SCALE GENOMIC DNA]</scope>
</reference>
<protein>
    <recommendedName>
        <fullName>Serine/threonine-protein kinase 40</fullName>
        <ecNumber>2.7.11.1</ecNumber>
    </recommendedName>
    <alternativeName>
        <fullName>Serine/threonine-protein kinase lyk4</fullName>
    </alternativeName>
</protein>
<accession>Q7T0B0</accession>
<accession>B1H340</accession>
<organism>
    <name type="scientific">Xenopus tropicalis</name>
    <name type="common">Western clawed frog</name>
    <name type="synonym">Silurana tropicalis</name>
    <dbReference type="NCBI Taxonomy" id="8364"/>
    <lineage>
        <taxon>Eukaryota</taxon>
        <taxon>Metazoa</taxon>
        <taxon>Chordata</taxon>
        <taxon>Craniata</taxon>
        <taxon>Vertebrata</taxon>
        <taxon>Euteleostomi</taxon>
        <taxon>Amphibia</taxon>
        <taxon>Batrachia</taxon>
        <taxon>Anura</taxon>
        <taxon>Pipoidea</taxon>
        <taxon>Pipidae</taxon>
        <taxon>Xenopodinae</taxon>
        <taxon>Xenopus</taxon>
        <taxon>Silurana</taxon>
    </lineage>
</organism>
<dbReference type="EC" id="2.7.11.1"/>
<dbReference type="EMBL" id="AY336058">
    <property type="protein sequence ID" value="AAQ01592.1"/>
    <property type="molecule type" value="mRNA"/>
</dbReference>
<dbReference type="EMBL" id="AAMC01091013">
    <property type="status" value="NOT_ANNOTATED_CDS"/>
    <property type="molecule type" value="Genomic_DNA"/>
</dbReference>
<dbReference type="EMBL" id="AAMC01091014">
    <property type="status" value="NOT_ANNOTATED_CDS"/>
    <property type="molecule type" value="Genomic_DNA"/>
</dbReference>
<dbReference type="EMBL" id="BC161237">
    <property type="protein sequence ID" value="AAI61237.1"/>
    <property type="molecule type" value="mRNA"/>
</dbReference>
<dbReference type="RefSeq" id="NP_001120455.1">
    <property type="nucleotide sequence ID" value="NM_001126983.1"/>
</dbReference>
<dbReference type="RefSeq" id="XP_012811947.1">
    <property type="nucleotide sequence ID" value="XM_012956493.3"/>
</dbReference>
<dbReference type="SMR" id="Q7T0B0"/>
<dbReference type="FunCoup" id="Q7T0B0">
    <property type="interactions" value="2216"/>
</dbReference>
<dbReference type="STRING" id="8364.ENSXETP00000053383"/>
<dbReference type="PaxDb" id="8364-ENSXETP00000011493"/>
<dbReference type="GeneID" id="100145549"/>
<dbReference type="KEGG" id="xtr:100145549"/>
<dbReference type="AGR" id="Xenbase:XB-GENE-1007328"/>
<dbReference type="CTD" id="83931"/>
<dbReference type="Xenbase" id="XB-GENE-1007328">
    <property type="gene designation" value="stk40"/>
</dbReference>
<dbReference type="eggNOG" id="KOG0583">
    <property type="taxonomic scope" value="Eukaryota"/>
</dbReference>
<dbReference type="HOGENOM" id="CLU_035107_0_0_1"/>
<dbReference type="InParanoid" id="Q7T0B0"/>
<dbReference type="OMA" id="HGIFKDR"/>
<dbReference type="OrthoDB" id="410920at2759"/>
<dbReference type="TreeFam" id="TF329785"/>
<dbReference type="Proteomes" id="UP000008143">
    <property type="component" value="Chromosome 2"/>
</dbReference>
<dbReference type="Bgee" id="ENSXETG00000005259">
    <property type="expression patterns" value="Expressed in egg cell and 13 other cell types or tissues"/>
</dbReference>
<dbReference type="GO" id="GO:0005737">
    <property type="term" value="C:cytoplasm"/>
    <property type="evidence" value="ECO:0007669"/>
    <property type="project" value="UniProtKB-SubCell"/>
</dbReference>
<dbReference type="GO" id="GO:0005634">
    <property type="term" value="C:nucleus"/>
    <property type="evidence" value="ECO:0007669"/>
    <property type="project" value="UniProtKB-SubCell"/>
</dbReference>
<dbReference type="GO" id="GO:0005524">
    <property type="term" value="F:ATP binding"/>
    <property type="evidence" value="ECO:0007669"/>
    <property type="project" value="UniProtKB-KW"/>
</dbReference>
<dbReference type="GO" id="GO:0106310">
    <property type="term" value="F:protein serine kinase activity"/>
    <property type="evidence" value="ECO:0007669"/>
    <property type="project" value="RHEA"/>
</dbReference>
<dbReference type="GO" id="GO:0004674">
    <property type="term" value="F:protein serine/threonine kinase activity"/>
    <property type="evidence" value="ECO:0007669"/>
    <property type="project" value="UniProtKB-KW"/>
</dbReference>
<dbReference type="CDD" id="cd13974">
    <property type="entry name" value="STKc_SHIK"/>
    <property type="match status" value="1"/>
</dbReference>
<dbReference type="FunFam" id="1.10.510.10:FF:000269">
    <property type="entry name" value="Serine/threonine-protein kinase 40"/>
    <property type="match status" value="1"/>
</dbReference>
<dbReference type="Gene3D" id="1.10.510.10">
    <property type="entry name" value="Transferase(Phosphotransferase) domain 1"/>
    <property type="match status" value="1"/>
</dbReference>
<dbReference type="InterPro" id="IPR011009">
    <property type="entry name" value="Kinase-like_dom_sf"/>
</dbReference>
<dbReference type="InterPro" id="IPR000719">
    <property type="entry name" value="Prot_kinase_dom"/>
</dbReference>
<dbReference type="InterPro" id="IPR024236">
    <property type="entry name" value="Ser/Thr_kinase_40"/>
</dbReference>
<dbReference type="InterPro" id="IPR008271">
    <property type="entry name" value="Ser/Thr_kinase_AS"/>
</dbReference>
<dbReference type="InterPro" id="IPR024104">
    <property type="entry name" value="Tribbles/Ser_Thr_kinase_40"/>
</dbReference>
<dbReference type="PANTHER" id="PTHR22961">
    <property type="entry name" value="SER/THR PROTEIN KINASE-TRB"/>
    <property type="match status" value="1"/>
</dbReference>
<dbReference type="PANTHER" id="PTHR22961:SF16">
    <property type="entry name" value="SERINE_THREONINE-PROTEIN KINASE 40"/>
    <property type="match status" value="1"/>
</dbReference>
<dbReference type="Pfam" id="PF00069">
    <property type="entry name" value="Pkinase"/>
    <property type="match status" value="1"/>
</dbReference>
<dbReference type="SMART" id="SM00220">
    <property type="entry name" value="S_TKc"/>
    <property type="match status" value="1"/>
</dbReference>
<dbReference type="SUPFAM" id="SSF56112">
    <property type="entry name" value="Protein kinase-like (PK-like)"/>
    <property type="match status" value="1"/>
</dbReference>
<dbReference type="PROSITE" id="PS50011">
    <property type="entry name" value="PROTEIN_KINASE_DOM"/>
    <property type="match status" value="1"/>
</dbReference>
<dbReference type="PROSITE" id="PS00108">
    <property type="entry name" value="PROTEIN_KINASE_ST"/>
    <property type="match status" value="1"/>
</dbReference>
<proteinExistence type="evidence at transcript level"/>
<keyword id="KW-0067">ATP-binding</keyword>
<keyword id="KW-0963">Cytoplasm</keyword>
<keyword id="KW-0418">Kinase</keyword>
<keyword id="KW-0547">Nucleotide-binding</keyword>
<keyword id="KW-0539">Nucleus</keyword>
<keyword id="KW-1185">Reference proteome</keyword>
<keyword id="KW-0723">Serine/threonine-protein kinase</keyword>
<keyword id="KW-0808">Transferase</keyword>
<comment type="function">
    <text evidence="1">May be a negative regulator of NF-kappa-B and p53-mediated gene transcription.</text>
</comment>
<comment type="catalytic activity">
    <reaction>
        <text>L-seryl-[protein] + ATP = O-phospho-L-seryl-[protein] + ADP + H(+)</text>
        <dbReference type="Rhea" id="RHEA:17989"/>
        <dbReference type="Rhea" id="RHEA-COMP:9863"/>
        <dbReference type="Rhea" id="RHEA-COMP:11604"/>
        <dbReference type="ChEBI" id="CHEBI:15378"/>
        <dbReference type="ChEBI" id="CHEBI:29999"/>
        <dbReference type="ChEBI" id="CHEBI:30616"/>
        <dbReference type="ChEBI" id="CHEBI:83421"/>
        <dbReference type="ChEBI" id="CHEBI:456216"/>
        <dbReference type="EC" id="2.7.11.1"/>
    </reaction>
</comment>
<comment type="catalytic activity">
    <reaction>
        <text>L-threonyl-[protein] + ATP = O-phospho-L-threonyl-[protein] + ADP + H(+)</text>
        <dbReference type="Rhea" id="RHEA:46608"/>
        <dbReference type="Rhea" id="RHEA-COMP:11060"/>
        <dbReference type="Rhea" id="RHEA-COMP:11605"/>
        <dbReference type="ChEBI" id="CHEBI:15378"/>
        <dbReference type="ChEBI" id="CHEBI:30013"/>
        <dbReference type="ChEBI" id="CHEBI:30616"/>
        <dbReference type="ChEBI" id="CHEBI:61977"/>
        <dbReference type="ChEBI" id="CHEBI:456216"/>
        <dbReference type="EC" id="2.7.11.1"/>
    </reaction>
</comment>
<comment type="subcellular location">
    <subcellularLocation>
        <location evidence="1">Nucleus</location>
    </subcellularLocation>
    <subcellularLocation>
        <location evidence="1">Cytoplasm</location>
    </subcellularLocation>
</comment>
<comment type="similarity">
    <text evidence="5">Belongs to the protein kinase superfamily. CAMK Ser/Thr protein kinase family.</text>
</comment>
<comment type="caution">
    <text evidence="5">Was originally thought to originate from X.laevis. However, sequence identity with X.tropicalis is much higher than with X.laevis, suggesting that the sequence is from X.tropicalis.</text>
</comment>
<sequence>MKRRASERDAGETSARSKALCSSISGSNAKRAGPFILGPRLGNSPVPSIVQCLARKDGTDDFYQLKILSLEERGDKAGETQEERQGKMLLHTEYSLLSLLHNQDGVVHHHGLFQDRTCEIVEDLEANKLVRKMRKRICLVLDCLCAHDFSDKTADLINLQHYVIKEKRLGERETVVIFYDVVRVVEALHKKNIVHRDLKLGNMVLNKRTHRITVTNFCLGKHLVSEDDLLKDQRGSPAYISPDVLSGRPYRGKPSDMWALGVVLFTMLYGQFPFYDSIPQELFRKIKAAEYSIPEDGRVSESTVCLIRKLLVLDPQQRLTASEVLESLGAIISSWQSMSSLSGPLQVVPDIDHLTSLENSQEAKVTEESSQYEFENYMRQQLLLAEEKNTIHEAKNFPQKRHFGNFPPIRRLGYDAQPVSPLDAAILAQRYLPPPHMALSNSH</sequence>
<name>STK40_XENTR</name>
<gene>
    <name type="primary">stk40</name>
</gene>